<organism>
    <name type="scientific">Homo sapiens</name>
    <name type="common">Human</name>
    <dbReference type="NCBI Taxonomy" id="9606"/>
    <lineage>
        <taxon>Eukaryota</taxon>
        <taxon>Metazoa</taxon>
        <taxon>Chordata</taxon>
        <taxon>Craniata</taxon>
        <taxon>Vertebrata</taxon>
        <taxon>Euteleostomi</taxon>
        <taxon>Mammalia</taxon>
        <taxon>Eutheria</taxon>
        <taxon>Euarchontoglires</taxon>
        <taxon>Primates</taxon>
        <taxon>Haplorrhini</taxon>
        <taxon>Catarrhini</taxon>
        <taxon>Hominidae</taxon>
        <taxon>Homo</taxon>
    </lineage>
</organism>
<dbReference type="EMBL" id="AC244255">
    <property type="status" value="NOT_ANNOTATED_CDS"/>
    <property type="molecule type" value="Genomic_DNA"/>
</dbReference>
<dbReference type="SMR" id="A0A087WW87"/>
<dbReference type="FunCoup" id="A0A087WW87">
    <property type="interactions" value="409"/>
</dbReference>
<dbReference type="IntAct" id="A0A087WW87">
    <property type="interactions" value="1"/>
</dbReference>
<dbReference type="MINT" id="A0A087WW87"/>
<dbReference type="STRING" id="9606.ENSP00000452747"/>
<dbReference type="IMGT_GENE-DB" id="IGKV2-40"/>
<dbReference type="GlyGen" id="A0A087WW87">
    <property type="glycosylation" value="1 site"/>
</dbReference>
<dbReference type="BioMuta" id="IGKV2-40"/>
<dbReference type="jPOST" id="A0A087WW87"/>
<dbReference type="MassIVE" id="A0A087WW87"/>
<dbReference type="Ensembl" id="ENST00000620613.1">
    <property type="protein sequence ID" value="ENSP00000480029.1"/>
    <property type="gene ID" value="ENSG00000273962.2"/>
</dbReference>
<dbReference type="UCSC" id="uc061lrf.1">
    <property type="organism name" value="human"/>
</dbReference>
<dbReference type="AGR" id="HGNC:5789"/>
<dbReference type="GeneCards" id="IGKV2-40"/>
<dbReference type="HGNC" id="HGNC:5789">
    <property type="gene designation" value="IGKV2-40"/>
</dbReference>
<dbReference type="HPA" id="ENSG00000273962">
    <property type="expression patterns" value="Tissue enriched (intestine)"/>
</dbReference>
<dbReference type="neXtProt" id="NX_A0A087WW87"/>
<dbReference type="VEuPathDB" id="HostDB:ENSG00000273962"/>
<dbReference type="InParanoid" id="A0A087WW87"/>
<dbReference type="OrthoDB" id="8908372at2759"/>
<dbReference type="PAN-GO" id="A0A087WW87">
    <property type="GO annotations" value="3 GO annotations based on evolutionary models"/>
</dbReference>
<dbReference type="PhylomeDB" id="A0A087WW87"/>
<dbReference type="ChiTaRS" id="IGKV2-40">
    <property type="organism name" value="human"/>
</dbReference>
<dbReference type="Pharos" id="A0A087WW87">
    <property type="development level" value="Tdark"/>
</dbReference>
<dbReference type="PRO" id="PR:A0A087WW87"/>
<dbReference type="Proteomes" id="UP000005640">
    <property type="component" value="Chromosome 2"/>
</dbReference>
<dbReference type="RNAct" id="A0A087WW87">
    <property type="molecule type" value="protein"/>
</dbReference>
<dbReference type="Bgee" id="ENSG00000273962">
    <property type="expression patterns" value="Expressed in spleen and 78 other cell types or tissues"/>
</dbReference>
<dbReference type="GO" id="GO:0005576">
    <property type="term" value="C:extracellular region"/>
    <property type="evidence" value="ECO:0007669"/>
    <property type="project" value="UniProtKB-SubCell"/>
</dbReference>
<dbReference type="GO" id="GO:0019814">
    <property type="term" value="C:immunoglobulin complex"/>
    <property type="evidence" value="ECO:0000318"/>
    <property type="project" value="GO_Central"/>
</dbReference>
<dbReference type="GO" id="GO:0005886">
    <property type="term" value="C:plasma membrane"/>
    <property type="evidence" value="ECO:0007669"/>
    <property type="project" value="UniProtKB-SubCell"/>
</dbReference>
<dbReference type="GO" id="GO:0002250">
    <property type="term" value="P:adaptive immune response"/>
    <property type="evidence" value="ECO:0007669"/>
    <property type="project" value="UniProtKB-KW"/>
</dbReference>
<dbReference type="GO" id="GO:0006955">
    <property type="term" value="P:immune response"/>
    <property type="evidence" value="ECO:0000318"/>
    <property type="project" value="GO_Central"/>
</dbReference>
<dbReference type="FunFam" id="2.60.40.10:FF:000365">
    <property type="entry name" value="If kappa light chain"/>
    <property type="match status" value="1"/>
</dbReference>
<dbReference type="Gene3D" id="2.60.40.10">
    <property type="entry name" value="Immunoglobulins"/>
    <property type="match status" value="1"/>
</dbReference>
<dbReference type="InterPro" id="IPR007110">
    <property type="entry name" value="Ig-like_dom"/>
</dbReference>
<dbReference type="InterPro" id="IPR036179">
    <property type="entry name" value="Ig-like_dom_sf"/>
</dbReference>
<dbReference type="InterPro" id="IPR013783">
    <property type="entry name" value="Ig-like_fold"/>
</dbReference>
<dbReference type="InterPro" id="IPR013106">
    <property type="entry name" value="Ig_V-set"/>
</dbReference>
<dbReference type="InterPro" id="IPR050150">
    <property type="entry name" value="IgV_Light_Chain"/>
</dbReference>
<dbReference type="PANTHER" id="PTHR23267">
    <property type="entry name" value="IMMUNOGLOBULIN LIGHT CHAIN"/>
    <property type="match status" value="1"/>
</dbReference>
<dbReference type="Pfam" id="PF07686">
    <property type="entry name" value="V-set"/>
    <property type="match status" value="1"/>
</dbReference>
<dbReference type="SMART" id="SM00406">
    <property type="entry name" value="IGv"/>
    <property type="match status" value="1"/>
</dbReference>
<dbReference type="SUPFAM" id="SSF48726">
    <property type="entry name" value="Immunoglobulin"/>
    <property type="match status" value="1"/>
</dbReference>
<dbReference type="PROSITE" id="PS50835">
    <property type="entry name" value="IG_LIKE"/>
    <property type="match status" value="1"/>
</dbReference>
<gene>
    <name evidence="4 9" type="primary">IGKV2-40</name>
</gene>
<reference key="1">
    <citation type="journal article" date="2005" name="Nature">
        <title>Generation and annotation of the DNA sequences of human chromosomes 2 and 4.</title>
        <authorList>
            <person name="Hillier L.W."/>
            <person name="Graves T.A."/>
            <person name="Fulton R.S."/>
            <person name="Fulton L.A."/>
            <person name="Pepin K.H."/>
            <person name="Minx P."/>
            <person name="Wagner-McPherson C."/>
            <person name="Layman D."/>
            <person name="Wylie K."/>
            <person name="Sekhon M."/>
            <person name="Becker M.C."/>
            <person name="Fewell G.A."/>
            <person name="Delehaunty K.D."/>
            <person name="Miner T.L."/>
            <person name="Nash W.E."/>
            <person name="Kremitzki C."/>
            <person name="Oddy L."/>
            <person name="Du H."/>
            <person name="Sun H."/>
            <person name="Bradshaw-Cordum H."/>
            <person name="Ali J."/>
            <person name="Carter J."/>
            <person name="Cordes M."/>
            <person name="Harris A."/>
            <person name="Isak A."/>
            <person name="van Brunt A."/>
            <person name="Nguyen C."/>
            <person name="Du F."/>
            <person name="Courtney L."/>
            <person name="Kalicki J."/>
            <person name="Ozersky P."/>
            <person name="Abbott S."/>
            <person name="Armstrong J."/>
            <person name="Belter E.A."/>
            <person name="Caruso L."/>
            <person name="Cedroni M."/>
            <person name="Cotton M."/>
            <person name="Davidson T."/>
            <person name="Desai A."/>
            <person name="Elliott G."/>
            <person name="Erb T."/>
            <person name="Fronick C."/>
            <person name="Gaige T."/>
            <person name="Haakenson W."/>
            <person name="Haglund K."/>
            <person name="Holmes A."/>
            <person name="Harkins R."/>
            <person name="Kim K."/>
            <person name="Kruchowski S.S."/>
            <person name="Strong C.M."/>
            <person name="Grewal N."/>
            <person name="Goyea E."/>
            <person name="Hou S."/>
            <person name="Levy A."/>
            <person name="Martinka S."/>
            <person name="Mead K."/>
            <person name="McLellan M.D."/>
            <person name="Meyer R."/>
            <person name="Randall-Maher J."/>
            <person name="Tomlinson C."/>
            <person name="Dauphin-Kohlberg S."/>
            <person name="Kozlowicz-Reilly A."/>
            <person name="Shah N."/>
            <person name="Swearengen-Shahid S."/>
            <person name="Snider J."/>
            <person name="Strong J.T."/>
            <person name="Thompson J."/>
            <person name="Yoakum M."/>
            <person name="Leonard S."/>
            <person name="Pearman C."/>
            <person name="Trani L."/>
            <person name="Radionenko M."/>
            <person name="Waligorski J.E."/>
            <person name="Wang C."/>
            <person name="Rock S.M."/>
            <person name="Tin-Wollam A.-M."/>
            <person name="Maupin R."/>
            <person name="Latreille P."/>
            <person name="Wendl M.C."/>
            <person name="Yang S.-P."/>
            <person name="Pohl C."/>
            <person name="Wallis J.W."/>
            <person name="Spieth J."/>
            <person name="Bieri T.A."/>
            <person name="Berkowicz N."/>
            <person name="Nelson J.O."/>
            <person name="Osborne J."/>
            <person name="Ding L."/>
            <person name="Meyer R."/>
            <person name="Sabo A."/>
            <person name="Shotland Y."/>
            <person name="Sinha P."/>
            <person name="Wohldmann P.E."/>
            <person name="Cook L.L."/>
            <person name="Hickenbotham M.T."/>
            <person name="Eldred J."/>
            <person name="Williams D."/>
            <person name="Jones T.A."/>
            <person name="She X."/>
            <person name="Ciccarelli F.D."/>
            <person name="Izaurralde E."/>
            <person name="Taylor J."/>
            <person name="Schmutz J."/>
            <person name="Myers R.M."/>
            <person name="Cox D.R."/>
            <person name="Huang X."/>
            <person name="McPherson J.D."/>
            <person name="Mardis E.R."/>
            <person name="Clifton S.W."/>
            <person name="Warren W.C."/>
            <person name="Chinwalla A.T."/>
            <person name="Eddy S.R."/>
            <person name="Marra M.A."/>
            <person name="Ovcharenko I."/>
            <person name="Furey T.S."/>
            <person name="Miller W."/>
            <person name="Eichler E.E."/>
            <person name="Bork P."/>
            <person name="Suyama M."/>
            <person name="Torrents D."/>
            <person name="Waterston R.H."/>
            <person name="Wilson R.K."/>
        </authorList>
    </citation>
    <scope>NUCLEOTIDE SEQUENCE [LARGE SCALE GENOMIC DNA] (IMGT ALLELE IGKV2-40*01)</scope>
</reference>
<reference key="2">
    <citation type="journal article" date="2001" name="Exp. Clin. Immunogenet.">
        <title>Nomenclature of the human immunoglobulin kappa (IGK) genes.</title>
        <authorList>
            <person name="Lefranc M.P."/>
        </authorList>
    </citation>
    <scope>NOMEMCLATURE</scope>
</reference>
<reference key="3">
    <citation type="book" date="2001" name="The Immunoglobulin FactsBook.">
        <title>The Immunoglobulin FactsBook.</title>
        <editorList>
            <person name="Lefranc M.P."/>
            <person name="Lefranc G."/>
        </editorList>
        <authorList>
            <person name="Lefranc M.P."/>
            <person name="Lefranc G."/>
        </authorList>
    </citation>
    <scope>NOMENCLATURE</scope>
</reference>
<reference key="4">
    <citation type="journal article" date="2007" name="Annu. Rev. Genet.">
        <title>Immunoglobulin somatic hypermutation.</title>
        <authorList>
            <person name="Teng G."/>
            <person name="Papavasiliou F.N."/>
        </authorList>
    </citation>
    <scope>REVIEW ON SOMATIC HYPERMUTATION</scope>
</reference>
<reference key="5">
    <citation type="journal article" date="2010" name="J. Allergy Clin. Immunol.">
        <title>Structure and function of immunoglobulins.</title>
        <authorList>
            <person name="Schroeder H.W. Jr."/>
            <person name="Cavacini L."/>
        </authorList>
    </citation>
    <scope>REVIEW ON IMMUNOGLOBULINS</scope>
</reference>
<reference key="6">
    <citation type="journal article" date="2012" name="Nat. Rev. Immunol.">
        <title>Molecular programming of B cell memory.</title>
        <authorList>
            <person name="McHeyzer-Williams M."/>
            <person name="Okitsu S."/>
            <person name="Wang N."/>
            <person name="McHeyzer-Williams L."/>
        </authorList>
    </citation>
    <scope>REVIEW ON FUNCTION</scope>
</reference>
<reference key="7">
    <citation type="journal article" date="2014" name="Front. Immunol.">
        <title>Immunoglobulin and T Cell Receptor Genes: IMGT((R)) and the Birth and Rise of Immunoinformatics.</title>
        <authorList>
            <person name="Lefranc M.P."/>
        </authorList>
    </citation>
    <scope>NOMENCLATURE</scope>
</reference>
<accession>A0A087WW87</accession>
<name>KV240_HUMAN</name>
<comment type="function">
    <text evidence="5 6 7 8">V region of the variable domain of immunoglobulin light chains that participates in the antigen recognition (PubMed:24600447). Immunoglobulins, also known as antibodies, are membrane-bound or secreted glycoproteins produced by B lymphocytes. In the recognition phase of humoral immunity, the membrane-bound immunoglobulins serve as receptors which, upon binding of a specific antigen, trigger the clonal expansion and differentiation of B lymphocytes into immunoglobulins-secreting plasma cells. Secreted immunoglobulins mediate the effector phase of humoral immunity, which results in the elimination of bound antigens (PubMed:20176268, PubMed:22158414). The antigen binding site is formed by the variable domain of one heavy chain, together with that of its associated light chain. Thus, each immunoglobulin has two antigen binding sites with remarkable affinity for a particular antigen. The variable domains are assembled by a process called V-(D)-J rearrangement and can then be subjected to somatic hypermutations which, after exposure to antigen and selection, allow affinity maturation for a particular antigen (PubMed:17576170, PubMed:20176268).</text>
</comment>
<comment type="subunit">
    <text evidence="6">Immunoglobulins are composed of two identical heavy chains and two identical light chains; disulfide-linked.</text>
</comment>
<comment type="subcellular location">
    <subcellularLocation>
        <location evidence="6 7">Secreted</location>
    </subcellularLocation>
    <subcellularLocation>
        <location evidence="6 7">Cell membrane</location>
    </subcellularLocation>
</comment>
<comment type="polymorphism">
    <text>There are several alleles. The sequence shown is that of IMGT allele IGKV2-40*01.</text>
</comment>
<comment type="caution">
    <text evidence="10">For an example of a full-length immunoglobulin kappa light chain see AC P0DOX7.</text>
</comment>
<feature type="signal peptide" evidence="2">
    <location>
        <begin position="1"/>
        <end position="19"/>
    </location>
</feature>
<feature type="chain" id="PRO_0000438683" description="Immunoglobulin kappa variable 2-40" evidence="2">
    <location>
        <begin position="20"/>
        <end position="121"/>
    </location>
</feature>
<feature type="domain" description="Ig-like" evidence="3">
    <location>
        <begin position="20"/>
        <end position="121" status="greater than"/>
    </location>
</feature>
<feature type="region of interest" description="Framework-1" evidence="1">
    <location>
        <begin position="21"/>
        <end position="43"/>
    </location>
</feature>
<feature type="region of interest" description="Complementarity-determining-1" evidence="1">
    <location>
        <begin position="44"/>
        <end position="60"/>
    </location>
</feature>
<feature type="region of interest" description="Framework-2" evidence="1">
    <location>
        <begin position="61"/>
        <end position="75"/>
    </location>
</feature>
<feature type="region of interest" description="Complementarity-determining-2" evidence="1">
    <location>
        <begin position="76"/>
        <end position="82"/>
    </location>
</feature>
<feature type="region of interest" description="Framework-3" evidence="1">
    <location>
        <begin position="83"/>
        <end position="114"/>
    </location>
</feature>
<feature type="region of interest" description="Complementarity-determining-3" evidence="1">
    <location>
        <begin position="115"/>
        <end position="121" status="greater than"/>
    </location>
</feature>
<feature type="disulfide bond" evidence="3">
    <location>
        <begin position="43"/>
        <end position="114"/>
    </location>
</feature>
<feature type="non-terminal residue">
    <location>
        <position position="121"/>
    </location>
</feature>
<keyword id="KW-1064">Adaptive immunity</keyword>
<keyword id="KW-1003">Cell membrane</keyword>
<keyword id="KW-1015">Disulfide bond</keyword>
<keyword id="KW-0391">Immunity</keyword>
<keyword id="KW-1280">Immunoglobulin</keyword>
<keyword id="KW-0393">Immunoglobulin domain</keyword>
<keyword id="KW-0472">Membrane</keyword>
<keyword id="KW-1185">Reference proteome</keyword>
<keyword id="KW-0964">Secreted</keyword>
<keyword id="KW-0732">Signal</keyword>
<protein>
    <recommendedName>
        <fullName evidence="4 9">Immunoglobulin kappa variable 2-40</fullName>
    </recommendedName>
</protein>
<evidence type="ECO:0000250" key="1">
    <source>
        <dbReference type="UniProtKB" id="P01602"/>
    </source>
</evidence>
<evidence type="ECO:0000255" key="2"/>
<evidence type="ECO:0000255" key="3">
    <source>
        <dbReference type="PROSITE-ProRule" id="PRU00114"/>
    </source>
</evidence>
<evidence type="ECO:0000303" key="4">
    <source>
    </source>
</evidence>
<evidence type="ECO:0000303" key="5">
    <source>
    </source>
</evidence>
<evidence type="ECO:0000303" key="6">
    <source>
    </source>
</evidence>
<evidence type="ECO:0000303" key="7">
    <source>
    </source>
</evidence>
<evidence type="ECO:0000303" key="8">
    <source>
    </source>
</evidence>
<evidence type="ECO:0000303" key="9">
    <source ref="3"/>
</evidence>
<evidence type="ECO:0000305" key="10"/>
<sequence>MRLPAQLLGLLMLWVPGSSEDIVMTQTPLSLPVTPGEPASISCRSSQSLLDSDDGNTYLDWYLQKPGQSPQLLIYTLSYRASGVPDRFSGSGSGTDFTLKISRVEAEDVGVYYCMQRIEFP</sequence>
<proteinExistence type="inferred from homology"/>